<feature type="chain" id="PRO_1000184609" description="Hydroxymethylglutaryl-CoA synthase">
    <location>
        <begin position="1"/>
        <end position="348"/>
    </location>
</feature>
<feature type="active site" description="Proton donor/acceptor" evidence="1">
    <location>
        <position position="80"/>
    </location>
</feature>
<feature type="active site" description="Acyl-thioester intermediate" evidence="1">
    <location>
        <position position="112"/>
    </location>
</feature>
<feature type="active site" description="Proton donor/acceptor" evidence="1">
    <location>
        <position position="235"/>
    </location>
</feature>
<feature type="binding site" evidence="1">
    <location>
        <position position="29"/>
    </location>
    <ligand>
        <name>(3S)-3-hydroxy-3-methylglutaryl-CoA</name>
        <dbReference type="ChEBI" id="CHEBI:43074"/>
    </ligand>
</feature>
<feature type="binding site" evidence="1">
    <location>
        <position position="112"/>
    </location>
    <ligand>
        <name>(3S)-3-hydroxy-3-methylglutaryl-CoA</name>
        <dbReference type="ChEBI" id="CHEBI:43074"/>
    </ligand>
</feature>
<feature type="binding site" evidence="1">
    <location>
        <position position="153"/>
    </location>
    <ligand>
        <name>(3S)-3-hydroxy-3-methylglutaryl-CoA</name>
        <dbReference type="ChEBI" id="CHEBI:43074"/>
    </ligand>
</feature>
<feature type="binding site" evidence="1">
    <location>
        <position position="202"/>
    </location>
    <ligand>
        <name>(3S)-3-hydroxy-3-methylglutaryl-CoA</name>
        <dbReference type="ChEBI" id="CHEBI:43074"/>
    </ligand>
</feature>
<feature type="binding site" evidence="1">
    <location>
        <position position="235"/>
    </location>
    <ligand>
        <name>(3S)-3-hydroxy-3-methylglutaryl-CoA</name>
        <dbReference type="ChEBI" id="CHEBI:43074"/>
    </ligand>
</feature>
<feature type="binding site" evidence="1">
    <location>
        <position position="240"/>
    </location>
    <ligand>
        <name>CoA</name>
        <dbReference type="ChEBI" id="CHEBI:57287"/>
        <note>ligand shared with acetoacetyl-CoA thiolase</note>
    </ligand>
</feature>
<feature type="binding site" evidence="1">
    <location>
        <position position="267"/>
    </location>
    <ligand>
        <name>(3S)-3-hydroxy-3-methylglutaryl-CoA</name>
        <dbReference type="ChEBI" id="CHEBI:43074"/>
    </ligand>
</feature>
<feature type="binding site" evidence="1">
    <location>
        <position position="297"/>
    </location>
    <ligand>
        <name>(3S)-3-hydroxy-3-methylglutaryl-CoA</name>
        <dbReference type="ChEBI" id="CHEBI:43074"/>
    </ligand>
</feature>
<organism>
    <name type="scientific">Metallosphaera sedula (strain ATCC 51363 / DSM 5348 / JCM 9185 / NBRC 15509 / TH2)</name>
    <dbReference type="NCBI Taxonomy" id="399549"/>
    <lineage>
        <taxon>Archaea</taxon>
        <taxon>Thermoproteota</taxon>
        <taxon>Thermoprotei</taxon>
        <taxon>Sulfolobales</taxon>
        <taxon>Sulfolobaceae</taxon>
        <taxon>Metallosphaera</taxon>
    </lineage>
</organism>
<comment type="function">
    <text evidence="1">Catalyzes the condensation of acetyl-CoA with acetoacetyl-CoA to form 3-hydroxy-3-methylglutaryl-CoA (HMG-CoA). Functions in the mevalonate (MVA) pathway leading to isopentenyl diphosphate (IPP), a key precursor for the biosynthesis of isoprenoid compounds that are building blocks of archaeal membrane lipids.</text>
</comment>
<comment type="catalytic activity">
    <reaction evidence="1">
        <text>acetoacetyl-CoA + acetyl-CoA + H2O = (3S)-3-hydroxy-3-methylglutaryl-CoA + CoA + H(+)</text>
        <dbReference type="Rhea" id="RHEA:10188"/>
        <dbReference type="ChEBI" id="CHEBI:15377"/>
        <dbReference type="ChEBI" id="CHEBI:15378"/>
        <dbReference type="ChEBI" id="CHEBI:43074"/>
        <dbReference type="ChEBI" id="CHEBI:57286"/>
        <dbReference type="ChEBI" id="CHEBI:57287"/>
        <dbReference type="ChEBI" id="CHEBI:57288"/>
        <dbReference type="EC" id="2.3.3.10"/>
    </reaction>
    <physiologicalReaction direction="left-to-right" evidence="1">
        <dbReference type="Rhea" id="RHEA:10189"/>
    </physiologicalReaction>
</comment>
<comment type="pathway">
    <text evidence="1">Metabolic intermediate biosynthesis; (R)-mevalonate biosynthesis; (R)-mevalonate from acetyl-CoA: step 2/3.</text>
</comment>
<comment type="subunit">
    <text evidence="1">Interacts with acetoacetyl-CoA thiolase that catalyzes the precedent step in the pathway and with a DUF35 protein. The acetoacetyl-CoA thiolase/HMG-CoA synthase complex channels the intermediate via a fused CoA-binding site, which allows for efficient coupling of the endergonic thiolase reaction with the exergonic HMGCS reaction.</text>
</comment>
<comment type="similarity">
    <text evidence="1">Belongs to the thiolase-like superfamily. Archaeal HMG-CoA synthase family.</text>
</comment>
<gene>
    <name type="ordered locus">Msed_1646</name>
</gene>
<dbReference type="EC" id="2.3.3.10" evidence="1"/>
<dbReference type="EMBL" id="CP000682">
    <property type="protein sequence ID" value="ABP95801.1"/>
    <property type="molecule type" value="Genomic_DNA"/>
</dbReference>
<dbReference type="RefSeq" id="WP_012021588.1">
    <property type="nucleotide sequence ID" value="NC_009440.1"/>
</dbReference>
<dbReference type="SMR" id="A4YH99"/>
<dbReference type="STRING" id="399549.Msed_1646"/>
<dbReference type="GeneID" id="91756154"/>
<dbReference type="KEGG" id="mse:Msed_1646"/>
<dbReference type="eggNOG" id="arCOG01767">
    <property type="taxonomic scope" value="Archaea"/>
</dbReference>
<dbReference type="HOGENOM" id="CLU_039592_7_0_2"/>
<dbReference type="UniPathway" id="UPA00058">
    <property type="reaction ID" value="UER00102"/>
</dbReference>
<dbReference type="Proteomes" id="UP000000242">
    <property type="component" value="Chromosome"/>
</dbReference>
<dbReference type="GO" id="GO:0004315">
    <property type="term" value="F:3-oxoacyl-[acyl-carrier-protein] synthase activity"/>
    <property type="evidence" value="ECO:0007669"/>
    <property type="project" value="InterPro"/>
</dbReference>
<dbReference type="GO" id="GO:0003985">
    <property type="term" value="F:acetyl-CoA C-acetyltransferase activity"/>
    <property type="evidence" value="ECO:0007669"/>
    <property type="project" value="UniProtKB-UniRule"/>
</dbReference>
<dbReference type="GO" id="GO:0004421">
    <property type="term" value="F:hydroxymethylglutaryl-CoA synthase activity"/>
    <property type="evidence" value="ECO:0007669"/>
    <property type="project" value="InterPro"/>
</dbReference>
<dbReference type="GO" id="GO:0006633">
    <property type="term" value="P:fatty acid biosynthetic process"/>
    <property type="evidence" value="ECO:0007669"/>
    <property type="project" value="InterPro"/>
</dbReference>
<dbReference type="GO" id="GO:0019287">
    <property type="term" value="P:isopentenyl diphosphate biosynthetic process, mevalonate pathway"/>
    <property type="evidence" value="ECO:0007669"/>
    <property type="project" value="UniProtKB-UniRule"/>
</dbReference>
<dbReference type="GO" id="GO:0044550">
    <property type="term" value="P:secondary metabolite biosynthetic process"/>
    <property type="evidence" value="ECO:0007669"/>
    <property type="project" value="TreeGrafter"/>
</dbReference>
<dbReference type="CDD" id="cd00827">
    <property type="entry name" value="init_cond_enzymes"/>
    <property type="match status" value="1"/>
</dbReference>
<dbReference type="Gene3D" id="3.40.47.10">
    <property type="match status" value="1"/>
</dbReference>
<dbReference type="HAMAP" id="MF_01409">
    <property type="entry name" value="HMG_CoA_synth_arch"/>
    <property type="match status" value="1"/>
</dbReference>
<dbReference type="InterPro" id="IPR013747">
    <property type="entry name" value="ACP_syn_III_C"/>
</dbReference>
<dbReference type="InterPro" id="IPR013751">
    <property type="entry name" value="ACP_syn_III_N"/>
</dbReference>
<dbReference type="InterPro" id="IPR004656">
    <property type="entry name" value="HMG_CoA_Synthase"/>
</dbReference>
<dbReference type="InterPro" id="IPR016039">
    <property type="entry name" value="Thiolase-like"/>
</dbReference>
<dbReference type="NCBIfam" id="TIGR00748">
    <property type="entry name" value="HMG_CoA_syn_Arc"/>
    <property type="match status" value="1"/>
</dbReference>
<dbReference type="NCBIfam" id="NF003274">
    <property type="entry name" value="PRK04262.1"/>
    <property type="match status" value="1"/>
</dbReference>
<dbReference type="PANTHER" id="PTHR34069">
    <property type="entry name" value="3-OXOACYL-[ACYL-CARRIER-PROTEIN] SYNTHASE 3"/>
    <property type="match status" value="1"/>
</dbReference>
<dbReference type="PANTHER" id="PTHR34069:SF3">
    <property type="entry name" value="ACYL-COA:ACYL-COA ALKYLTRANSFERASE"/>
    <property type="match status" value="1"/>
</dbReference>
<dbReference type="Pfam" id="PF08545">
    <property type="entry name" value="ACP_syn_III"/>
    <property type="match status" value="1"/>
</dbReference>
<dbReference type="Pfam" id="PF08541">
    <property type="entry name" value="ACP_syn_III_C"/>
    <property type="match status" value="1"/>
</dbReference>
<dbReference type="SUPFAM" id="SSF53901">
    <property type="entry name" value="Thiolase-like"/>
    <property type="match status" value="1"/>
</dbReference>
<protein>
    <recommendedName>
        <fullName evidence="1">Hydroxymethylglutaryl-CoA synthase</fullName>
        <shortName evidence="1">HMG-CoA synthase</shortName>
        <shortName evidence="1">HMGCS</shortName>
        <ecNumber evidence="1">2.3.3.10</ecNumber>
    </recommendedName>
</protein>
<name>HMGCS_METS5</name>
<accession>A4YH99</accession>
<proteinExistence type="inferred from homology"/>
<sequence length="348" mass="37714">MHTGIIGWGSYVPKYRIKVSDIASVWGKEEGVVKALGLTEKSVPAADEDSTTMAIEASRDALTRAMIDPREVEMALFGSESKVYAVKSTSAILIDALGLSKFSLTADLEFACRAASAGLRMAFSMVESGQVSYSLVVGSDTAQSNPGDVLELSSAAAAVAFVVGRAEEASAVVEASTSYVTDTPDFWRRDGMPYPLHGEAFTGEPAYFAHIYEAVNRLLQDTGLKVSDFDYFVFHQPNGKFPFQMAKKLGVPLEKVKQGMVSTLIGNPYNASALLGFARVLDVAKPGQRVLVAPFGSGAGSDAYSFVITDKILERQKLAHTTDYYIQRKKLVDYASYAKTTHKFKVYD</sequence>
<reference key="1">
    <citation type="journal article" date="2008" name="Appl. Environ. Microbiol.">
        <title>The genome sequence of the metal-mobilizing, extremely thermoacidophilic archaeon Metallosphaera sedula provides insights into bioleaching-associated metabolism.</title>
        <authorList>
            <person name="Auernik K.S."/>
            <person name="Maezato Y."/>
            <person name="Blum P.H."/>
            <person name="Kelly R.M."/>
        </authorList>
    </citation>
    <scope>NUCLEOTIDE SEQUENCE [LARGE SCALE GENOMIC DNA]</scope>
    <source>
        <strain>ATCC 51363 / DSM 5348 / JCM 9185 / NBRC 15509 / TH2</strain>
    </source>
</reference>
<evidence type="ECO:0000255" key="1">
    <source>
        <dbReference type="HAMAP-Rule" id="MF_01409"/>
    </source>
</evidence>
<keyword id="KW-0012">Acyltransferase</keyword>
<keyword id="KW-0414">Isoprene biosynthesis</keyword>
<keyword id="KW-1185">Reference proteome</keyword>
<keyword id="KW-0808">Transferase</keyword>